<organism>
    <name type="scientific">Paramecium primaurelia</name>
    <dbReference type="NCBI Taxonomy" id="5886"/>
    <lineage>
        <taxon>Eukaryota</taxon>
        <taxon>Sar</taxon>
        <taxon>Alveolata</taxon>
        <taxon>Ciliophora</taxon>
        <taxon>Intramacronucleata</taxon>
        <taxon>Oligohymenophorea</taxon>
        <taxon>Peniculida</taxon>
        <taxon>Parameciidae</taxon>
        <taxon>Paramecium</taxon>
    </lineage>
</organism>
<keyword id="KW-1003">Cell membrane</keyword>
<keyword id="KW-0325">Glycoprotein</keyword>
<keyword id="KW-0336">GPI-anchor</keyword>
<keyword id="KW-0449">Lipoprotein</keyword>
<keyword id="KW-0472">Membrane</keyword>
<keyword id="KW-0677">Repeat</keyword>
<keyword id="KW-0732">Signal</keyword>
<name>G168_PARPR</name>
<reference key="1">
    <citation type="journal article" date="1990" name="J. Mol. Biol.">
        <title>Conserved sequences flank variable tandem repeats in two alleles of the G surface protein of Paramecium primaurelia.</title>
        <authorList>
            <person name="Prat A."/>
        </authorList>
    </citation>
    <scope>NUCLEOTIDE SEQUENCE [GENOMIC DNA]</scope>
    <source>
        <strain>168</strain>
    </source>
</reference>
<evidence type="ECO:0000255" key="1"/>
<protein>
    <recommendedName>
        <fullName>G surface protein, allelic form 168</fullName>
    </recommendedName>
</protein>
<dbReference type="EMBL" id="X52133">
    <property type="protein sequence ID" value="CAA36378.1"/>
    <property type="molecule type" value="Genomic_DNA"/>
</dbReference>
<dbReference type="PIR" id="S09118">
    <property type="entry name" value="S09118"/>
</dbReference>
<dbReference type="GO" id="GO:0005886">
    <property type="term" value="C:plasma membrane"/>
    <property type="evidence" value="ECO:0007669"/>
    <property type="project" value="UniProtKB-SubCell"/>
</dbReference>
<dbReference type="GO" id="GO:0098552">
    <property type="term" value="C:side of membrane"/>
    <property type="evidence" value="ECO:0007669"/>
    <property type="project" value="UniProtKB-KW"/>
</dbReference>
<dbReference type="InterPro" id="IPR002895">
    <property type="entry name" value="Paramecium_SA"/>
</dbReference>
<dbReference type="InterPro" id="IPR016201">
    <property type="entry name" value="PSI"/>
</dbReference>
<dbReference type="Pfam" id="PF01508">
    <property type="entry name" value="Paramecium_SA"/>
    <property type="match status" value="31"/>
</dbReference>
<dbReference type="SMART" id="SM00639">
    <property type="entry name" value="PSA"/>
    <property type="match status" value="33"/>
</dbReference>
<dbReference type="SMART" id="SM00423">
    <property type="entry name" value="PSI"/>
    <property type="match status" value="12"/>
</dbReference>
<gene>
    <name type="primary">168G</name>
</gene>
<proteinExistence type="evidence at transcript level"/>
<sequence>MNNKFIIFSLLLALVASQTYSLTSCTCAQLLSEGDCIKNVSLGCSWDTTKKTCGVSTTPVTPTVTYAAYCDTFAETDCPKAKPCTDCGNYAACAWVESKCTFFTGCTPFAKTLDSECQAISNRCITDGTHCVEVDACSTYKKQLPCVKNAAGSLCYWDTTNNTCDKLPATFATDKDCRDVISTCTTKTGGGCVDSGNNCSDQTLEIQCVWNKLKTTSCYWDGAACKDRICDNAPTSLTTDDACKTFRTDGTCTTKANGGCVTRTTCAAATIQASCIKNSSGGDCYWTGTACVDKTCANAPTTMTTNSACAGFVTGCITKSGGGCVANGACSVANVQAACVKNSSNFDCIWDTTCKEKTCANAPTTNNTHDLCTSYLSTCTVKSGGGCQNRSCANAPTTMTTNDACEAYLTGNNCITKSGGGCVTNTTCAAITLEAACVKNSSGSTCFWDTASSSCKDKTCVNAPATNTTHDLCQAFLNTCTVNSTSAGCVEKTCENSLVLAICDKDTSSRACIWKGKCYKKQCVLASSATTTHADCQTYHSTCTLSNSGTGCVPLPLKCEAITIEAACNLKANGQPCGWNGSQCIDKACSTASKTFTTTSQCTGHISTCVANNPVTVNGSLTIQGCQDLPTSCAARKSSENCEIARVGFPTCLWVSSSTSCVEKSCATASTVGTTGALSAGGFTFSGCQTYLNTCISNNTADGCIAKPSSCSSLVSSNCRDGSKASGDCYWNGSSCVDKTCANITLTSHASCYSIFNQCTVNNGGTACQTLATACTSYSTQENCKFTSTNKNCVWTGLACRNATCADAPDTTAYDSDTECLAYPTPSETCTVVYKVGAQGCVSKSANCSDYMTSAQCHKTLTNLTANDDCKWIVDRCYALSSFATGACTTFKGNKTMCEGYRAGCTNTVGAASSASCTLDCTLKTGSGLTFADCQALDSTCSVKKDGTGCIVIQSTCAGYGSTATNCFRSSASGTAGYCAMNTNCQSVTSAAECAFVTGLTGLDHSKCQLYHSSCTSLKDGTGCQEYKTACSSYATGNTCANSVQGKCFDDATDCLRFANCASITGTGLTNTICVTYDPGCVANVNGTACQEKLATCAAYLTQNSCSTSTAGTCAWSGSACLTVVDANVATECAYITGTGLTNAICAGYNAKCTVNRAGTACQKKEALCATYAAVQATCSQSDAGLCAWSGSACLTVVDANVATECPYITGTGLTNAICAGYNAKCTVNRAGTACQKKEALCATYAAVQATCSQSDAGLCAWSGSACLTVVDANVATECPYITGTGLTDAICAGYNAKCTVNRAGTACQKKEALCATYAAVQATCSQSDAGLCAWSGSACLTVVDANVATECPYITGTGLTNAICAGYNAKCTVNRAGTACQKKEALCATYAAVQATCSQSDAGLCAWSGSACLTVVDANVATECAYITGTGLTDAICAGYNAKCTNLKDGTGCQDEKATCKLYTTQNKCTSQTTGPLSCLWFDNSCSPITDVTCSAIVQSGLDHAQCQAYSTGCTSVSDGSKCQDFKTTCEQYAGTALSCTKTATSKCYLQGSNCITISNVATDCAKITGSAGTITYEICQSYNTGCSVNRARSACVQQQAQCSGYTSAMTSCYKSGAGLCIASTNTDTACVAATAATTCDAVYLGTGNYSSANCNEMKAGCTNNGATACVAKTCANAVVIFNHTNCNGYLNTCTVNSGNSACQTMASKCADQTQASCLYSVEGECVVVGTSCVRKTCDTAATDATRDDDTECSAYQQSCTVARLGACQARAACASYKSSLQCKFNTSGGRCFWNPTNKTCVDLNCGNIEASTLYDTHNECVVVDATLACTVRATNGAAVQGCMARGACSSYTIEEQCKTNASNGVCVWNTNANLPAPACQDKSCTSAPTSTTTHNDCYAYYNTATVKCTVVATPSNSGGNPTLGGCQQTAACSSYIDKEQCQINANGEPCGWNGTQCADKSCATAPATADYDDDTKCRAYITNKCTVSDSGQGCVEIPATCETMTQKQCYYNKAGDPCYWTGTACITKSCDNAPDATATADECNTYLAGCTLDNVKCKTKVCEDFAFATDALCKQAISTCTTNGTNCVTRGTCFQALSQAGCVTSSTNQQCEWIPAVLNASNVITSPAYCTIKNCSTAPITLTSEAACAGYFTNCTTKNGGGCVTKSTCSAVTIDVACTTALNGTVCAWDSAQNKCRDKDCQDFSGTTHAACQAQRAGCTAGASGKCARVQNCEQTSVRAACIEGTNGPCLWIDKYQNTDGTKGACFRYTSCKSLNWNNDSSCKWISNKCTTNGSNCVGITLCSETNTDGGCVTGYDGACIQSVPALNSSDPKVCKPYTSCADAFYTTHSDCQIASSKCTTNGTTGCIALGSCSSYTAQAGCYFNDKGTLYTSGVITSTGICTWDTTSSSCRDQSCADLTGTTHATCSSQLSTCTSDGTTCLLKGACTSYTTQTACTTAVGSDGACYWELASATNNNTAKCRLLTCADIQNGTATNVCSVALSTCVSNGTACIPKANCSTYTSKIACNSGGLDGICVFTQSTATGAAAGTGTCALMTACTVANNDQTACQAARDRCSWTAASGTGATAVASKCATHTCATNQATNGACTRFLNWDKKTQQVCTLVSGACTATDPSTLSSNDCFLVSGYTYTWNASTSKCGVCTAVVVQPNTTDNNTNTTDNNTTTDSGYILGLSIVLGYLMF</sequence>
<comment type="function">
    <text>This protein is the surface antigen or immobilization antigen of Paramecium primaurelia.</text>
</comment>
<comment type="subcellular location">
    <subcellularLocation>
        <location>Cell membrane</location>
        <topology>Lipid-anchor</topology>
        <topology>GPI-anchor</topology>
    </subcellularLocation>
</comment>
<comment type="induction">
    <text>Expression of G protein occurs at low temperatures (14-32 degrees Celsius).</text>
</comment>
<comment type="domain">
    <text>It has internal homologies and a highly periodic structure with 37 periods of about 75 residues, each period containing 8 cysteines, except for four half periods. A variable part of 475 residues comprises 4 almost identical periods in the middle of the protein.</text>
</comment>
<accession>P17053</accession>
<feature type="signal peptide" evidence="1">
    <location>
        <begin position="1"/>
        <end position="20"/>
    </location>
</feature>
<feature type="chain" id="PRO_0000021311" description="G surface protein, allelic form 168">
    <location>
        <begin position="21"/>
        <end position="2704"/>
    </location>
</feature>
<feature type="repeat" description="PSA 1" evidence="1">
    <location>
        <begin position="112"/>
        <end position="165"/>
    </location>
</feature>
<feature type="repeat" description="PSA 2" evidence="1">
    <location>
        <begin position="172"/>
        <end position="231"/>
    </location>
</feature>
<feature type="repeat" description="PSA 3" evidence="1">
    <location>
        <begin position="238"/>
        <end position="297"/>
    </location>
</feature>
<feature type="repeat" description="PSA 4" evidence="1">
    <location>
        <begin position="304"/>
        <end position="360"/>
    </location>
</feature>
<feature type="repeat" description="PSA 5" evidence="1">
    <location>
        <begin position="400"/>
        <end position="460"/>
    </location>
</feature>
<feature type="repeat" description="PSA 6" evidence="1">
    <location>
        <begin position="468"/>
        <end position="523"/>
    </location>
</feature>
<feature type="repeat" description="PSA 7" evidence="1">
    <location>
        <begin position="530"/>
        <end position="590"/>
    </location>
</feature>
<feature type="repeat" description="PSA 8" evidence="1">
    <location>
        <begin position="596"/>
        <end position="667"/>
    </location>
</feature>
<feature type="repeat" description="PSA 9" evidence="1">
    <location>
        <begin position="683"/>
        <end position="742"/>
    </location>
</feature>
<feature type="repeat" description="PSA 10" evidence="1">
    <location>
        <begin position="747"/>
        <end position="806"/>
    </location>
</feature>
<feature type="repeat" description="PSA 11" evidence="1">
    <location>
        <begin position="815"/>
        <end position="881"/>
    </location>
</feature>
<feature type="repeat" description="PSA 12" evidence="1">
    <location>
        <begin position="929"/>
        <end position="994"/>
    </location>
</feature>
<feature type="repeat" description="PSA 13" evidence="1">
    <location>
        <begin position="1003"/>
        <end position="1061"/>
    </location>
</feature>
<feature type="repeat" description="PSA 14" evidence="1">
    <location>
        <begin position="1069"/>
        <end position="1123"/>
    </location>
</feature>
<feature type="repeat" description="PSA 15" evidence="1">
    <location>
        <begin position="1141"/>
        <end position="1196"/>
    </location>
</feature>
<feature type="repeat" description="PSA 16" evidence="1">
    <location>
        <begin position="1214"/>
        <end position="1269"/>
    </location>
</feature>
<feature type="repeat" description="PSA 17" evidence="1">
    <location>
        <begin position="1287"/>
        <end position="1342"/>
    </location>
</feature>
<feature type="repeat" description="PSA 18" evidence="1">
    <location>
        <begin position="1360"/>
        <end position="1415"/>
    </location>
</feature>
<feature type="repeat" description="PSA 19" evidence="1">
    <location>
        <begin position="1433"/>
        <end position="1495"/>
    </location>
</feature>
<feature type="repeat" description="PSA 20" evidence="1">
    <location>
        <begin position="1503"/>
        <end position="1566"/>
    </location>
</feature>
<feature type="repeat" description="PSA 21" evidence="1">
    <location>
        <begin position="1576"/>
        <end position="1641"/>
    </location>
</feature>
<feature type="repeat" description="PSA 22" evidence="1">
    <location>
        <begin position="1684"/>
        <end position="1740"/>
    </location>
</feature>
<feature type="repeat" description="PSA 23" evidence="1">
    <location>
        <begin position="1750"/>
        <end position="1807"/>
    </location>
</feature>
<feature type="repeat" description="PSA 24" evidence="1">
    <location>
        <begin position="1817"/>
        <end position="1887"/>
    </location>
</feature>
<feature type="repeat" description="PSA 25" evidence="1">
    <location>
        <begin position="1893"/>
        <end position="1965"/>
    </location>
</feature>
<feature type="repeat" description="PSA 26" evidence="1">
    <location>
        <begin position="1974"/>
        <end position="2033"/>
    </location>
</feature>
<feature type="repeat" description="PSA 27" evidence="1">
    <location>
        <begin position="2070"/>
        <end position="2137"/>
    </location>
</feature>
<feature type="repeat" description="PSA 28" evidence="1">
    <location>
        <begin position="2145"/>
        <end position="2204"/>
    </location>
</feature>
<feature type="repeat" description="PSA 29" evidence="1">
    <location>
        <begin position="2209"/>
        <end position="2274"/>
    </location>
</feature>
<feature type="repeat" description="PSA 30" evidence="1">
    <location>
        <begin position="2348"/>
        <end position="2419"/>
    </location>
</feature>
<feature type="repeat" description="PSA 31" evidence="1">
    <location>
        <begin position="2424"/>
        <end position="2489"/>
    </location>
</feature>